<accession>D0NIN5</accession>
<organism>
    <name type="scientific">Phytophthora infestans (strain T30-4)</name>
    <name type="common">Potato late blight agent</name>
    <dbReference type="NCBI Taxonomy" id="403677"/>
    <lineage>
        <taxon>Eukaryota</taxon>
        <taxon>Sar</taxon>
        <taxon>Stramenopiles</taxon>
        <taxon>Oomycota</taxon>
        <taxon>Peronosporales</taxon>
        <taxon>Peronosporaceae</taxon>
        <taxon>Phytophthora</taxon>
    </lineage>
</organism>
<feature type="signal peptide" evidence="1">
    <location>
        <begin position="1"/>
        <end position="20"/>
    </location>
</feature>
<feature type="chain" id="PRO_5003012473" description="RxLR effector protein PexRD2">
    <location>
        <begin position="21"/>
        <end position="121"/>
    </location>
</feature>
<feature type="region of interest" description="WY domain" evidence="11">
    <location>
        <begin position="57"/>
        <end position="121"/>
    </location>
</feature>
<feature type="short sequence motif" description="RxLR-dEER" evidence="10">
    <location>
        <begin position="38"/>
        <end position="56"/>
    </location>
</feature>
<feature type="mutagenesis site" description="In PexRD2-hepta; retains the ability to oligomerize but weakens the interaction with MAPKKK epsilon." evidence="5">
    <original>KIAAAANSARAMEKLGE</original>
    <variation>DIAHAATSAGAMQQLGQ</variation>
    <location>
        <begin position="85"/>
        <end position="101"/>
    </location>
</feature>
<feature type="mutagenesis site" description="In PexRD2-oct; retains the ability to oligomerize but abolishes the interaction with MAPKKK epsilon." evidence="5">
    <original>KIAAAANSARAMEKLGE</original>
    <variation>DIAHAETSAGAMQQLGQ</variation>
    <location>
        <begin position="85"/>
        <end position="101"/>
    </location>
</feature>
<feature type="mutagenesis site" description="Prevents the ability to oligomerize and the interaction with MAPKKK epsilon." evidence="5">
    <original>L</original>
    <variation>D</variation>
    <location>
        <position position="109"/>
    </location>
</feature>
<feature type="mutagenesis site" description="Prevents the ability to oligomerize and the interaction with MAPKKK epsilon." evidence="5">
    <original>L</original>
    <variation>D</variation>
    <location>
        <position position="112"/>
    </location>
</feature>
<feature type="helix" evidence="12">
    <location>
        <begin position="60"/>
        <end position="68"/>
    </location>
</feature>
<feature type="helix" evidence="12">
    <location>
        <begin position="73"/>
        <end position="79"/>
    </location>
</feature>
<feature type="helix" evidence="12">
    <location>
        <begin position="83"/>
        <end position="91"/>
    </location>
</feature>
<feature type="helix" evidence="12">
    <location>
        <begin position="93"/>
        <end position="100"/>
    </location>
</feature>
<feature type="helix" evidence="12">
    <location>
        <begin position="103"/>
        <end position="117"/>
    </location>
</feature>
<gene>
    <name evidence="8" type="primary">PexRD2</name>
    <name type="ORF">PITG_11383</name>
</gene>
<proteinExistence type="evidence at protein level"/>
<name>RD2_PHYIT</name>
<comment type="function">
    <text evidence="3 5 6 7">Effector that enhances P.infestans colonization of Nicotiana benthamiana leaves (PubMed:24632534, PubMed:30329083). Induces a weak Cell death response in N.benthamiana. PexRD2-induced cell death is dependent on SGT1, suggesting that PexRD2 is recognized by the plant immune system (PubMed:19794118). Interacts with the kinase domain of the host MAPKKK epsilon, a positive regulator of cell death associated with plant immunity, and perturbs signaling pathways triggered by MAPKKK epsilon (PubMed:24632534, PubMed:28386988).</text>
</comment>
<comment type="subunit">
    <text evidence="4 5">Homodimer (PubMed:21813644, PubMed:24632534). Interacts with host MAPKKK epsilon (via its kinase domain) (PubMed:24632534).</text>
</comment>
<comment type="subcellular location">
    <subcellularLocation>
        <location evidence="7">Secreted</location>
    </subcellularLocation>
    <subcellularLocation>
        <location evidence="3 7">Host cytoplasm</location>
    </subcellularLocation>
    <subcellularLocation>
        <location evidence="7">Host nucleus</location>
    </subcellularLocation>
</comment>
<comment type="induction">
    <text evidence="2 3">Expression is induced during host plant infection.</text>
</comment>
<comment type="domain">
    <text evidence="10">The RxLR-dEER motif acts to carry the protein into the host cell cytoplasm through binding to cell surface phosphatidylinositol-3-phosphate.</text>
</comment>
<comment type="domain">
    <text evidence="11">The WY domain contains 3 alpha-helices and is required for the interaction with the host MAPKKK epsilon.</text>
</comment>
<comment type="similarity">
    <text evidence="9">Belongs to the RxLR effector family.</text>
</comment>
<reference key="1">
    <citation type="journal article" date="2009" name="Nature">
        <title>Genome sequence and analysis of the Irish potato famine pathogen Phytophthora infestans.</title>
        <authorList>
            <consortium name="The Broad Institute Genome Sequencing Platform"/>
            <person name="Haas B.J."/>
            <person name="Kamoun S."/>
            <person name="Zody M.C."/>
            <person name="Jiang R.H."/>
            <person name="Handsaker R.E."/>
            <person name="Cano L.M."/>
            <person name="Grabherr M."/>
            <person name="Kodira C.D."/>
            <person name="Raffaele S."/>
            <person name="Torto-Alalibo T."/>
            <person name="Bozkurt T.O."/>
            <person name="Ah-Fong A.M."/>
            <person name="Alvarado L."/>
            <person name="Anderson V.L."/>
            <person name="Armstrong M.R."/>
            <person name="Avrova A."/>
            <person name="Baxter L."/>
            <person name="Beynon J."/>
            <person name="Boevink P.C."/>
            <person name="Bollmann S.R."/>
            <person name="Bos J.I."/>
            <person name="Bulone V."/>
            <person name="Cai G."/>
            <person name="Cakir C."/>
            <person name="Carrington J.C."/>
            <person name="Chawner M."/>
            <person name="Conti L."/>
            <person name="Costanzo S."/>
            <person name="Ewan R."/>
            <person name="Fahlgren N."/>
            <person name="Fischbach M.A."/>
            <person name="Fugelstad J."/>
            <person name="Gilroy E.M."/>
            <person name="Gnerre S."/>
            <person name="Green P.J."/>
            <person name="Grenville-Briggs L.J."/>
            <person name="Griffith J."/>
            <person name="Grunwald N.J."/>
            <person name="Horn K."/>
            <person name="Horner N.R."/>
            <person name="Hu C.H."/>
            <person name="Huitema E."/>
            <person name="Jeong D.H."/>
            <person name="Jones A.M."/>
            <person name="Jones J.D."/>
            <person name="Jones R.W."/>
            <person name="Karlsson E.K."/>
            <person name="Kunjeti S.G."/>
            <person name="Lamour K."/>
            <person name="Liu Z."/>
            <person name="Ma L."/>
            <person name="Maclean D."/>
            <person name="Chibucos M.C."/>
            <person name="McDonald H."/>
            <person name="McWalters J."/>
            <person name="Meijer H.J."/>
            <person name="Morgan W."/>
            <person name="Morris P.F."/>
            <person name="Munro C.A."/>
            <person name="O'Neill K."/>
            <person name="Ospina-Giraldo M."/>
            <person name="Pinzon A."/>
            <person name="Pritchard L."/>
            <person name="Ramsahoye B."/>
            <person name="Ren Q."/>
            <person name="Restrepo S."/>
            <person name="Roy S."/>
            <person name="Sadanandom A."/>
            <person name="Savidor A."/>
            <person name="Schornack S."/>
            <person name="Schwartz D.C."/>
            <person name="Schumann U.D."/>
            <person name="Schwessinger B."/>
            <person name="Seyer L."/>
            <person name="Sharpe T."/>
            <person name="Silvar C."/>
            <person name="Song J."/>
            <person name="Studholme D.J."/>
            <person name="Sykes S."/>
            <person name="Thines M."/>
            <person name="van de Vondervoort P.J."/>
            <person name="Phuntumart V."/>
            <person name="Wawra S."/>
            <person name="Weide R."/>
            <person name="Win J."/>
            <person name="Young C."/>
            <person name="Zhou S."/>
            <person name="Fry W."/>
            <person name="Meyers B.C."/>
            <person name="van West P."/>
            <person name="Ristaino J."/>
            <person name="Govers F."/>
            <person name="Birch P.R."/>
            <person name="Whisson S.C."/>
            <person name="Judelson H.S."/>
            <person name="Nusbaum C."/>
        </authorList>
    </citation>
    <scope>NUCLEOTIDE SEQUENCE [LARGE SCALE GENOMIC DNA]</scope>
    <source>
        <strain>T30-4</strain>
    </source>
</reference>
<reference key="2">
    <citation type="journal article" date="2007" name="Nature">
        <title>A translocation signal for delivery of oomycete effector proteins into host plant cells.</title>
        <authorList>
            <person name="Whisson S.C."/>
            <person name="Boevink P.C."/>
            <person name="Moleleki L."/>
            <person name="Avrova A.O."/>
            <person name="Morales J.G."/>
            <person name="Gilroy E.M."/>
            <person name="Armstrong M.R."/>
            <person name="Grouffaud S."/>
            <person name="van West P."/>
            <person name="Chapman S."/>
            <person name="Hein I."/>
            <person name="Toth I.K."/>
            <person name="Pritchard L."/>
            <person name="Birch P.R."/>
        </authorList>
    </citation>
    <scope>INDUCTION</scope>
    <scope>DOMAIN</scope>
</reference>
<reference key="3">
    <citation type="journal article" date="2009" name="Plant Cell">
        <title>In planta expression screens of Phytophthora infestans RXLR effectors reveal diverse phenotypes, including activation of the Solanum bulbocastanum disease resistance protein Rpi-blb2.</title>
        <authorList>
            <person name="Oh S.K."/>
            <person name="Young C."/>
            <person name="Lee M."/>
            <person name="Oliva R."/>
            <person name="Bozkurt T.O."/>
            <person name="Cano L.M."/>
            <person name="Win J."/>
            <person name="Bos J.I."/>
            <person name="Liu H.Y."/>
            <person name="van Damme M."/>
            <person name="Morgan W."/>
            <person name="Choi D."/>
            <person name="Van der Vossen E.A."/>
            <person name="Vleeshouwers V.G."/>
            <person name="Kamoun S."/>
        </authorList>
    </citation>
    <scope>INDUCTION</scope>
</reference>
<reference key="4">
    <citation type="journal article" date="2014" name="Plant Cell">
        <title>Phytophthora infestans RXLR effector PexRD2 interacts with host MAPKKK epsilon to suppress plant immune signaling.</title>
        <authorList>
            <person name="King S.R."/>
            <person name="McLellan H."/>
            <person name="Boevink P.C."/>
            <person name="Armstrong M.R."/>
            <person name="Bukharova T."/>
            <person name="Sukarta O."/>
            <person name="Win J."/>
            <person name="Kamoun S."/>
            <person name="Birch P.R."/>
            <person name="Banfield M.J."/>
        </authorList>
    </citation>
    <scope>FUNCTION</scope>
    <scope>SUBCELLULAR LOCATION</scope>
    <scope>INTERACTION WITH MAPKKK EPSILON</scope>
    <scope>DOMAIN</scope>
    <scope>MUTAGENESIS OF 85-LYS--GLU-101; LEU-109 AND LEU-112</scope>
    <scope>SUBUNIT</scope>
</reference>
<reference key="5">
    <citation type="journal article" date="2017" name="New Phytol.">
        <title>A new proteinaceous pathogen-associated molecular pattern (PAMP) identified in Ascomycete fungi induces cell death in Solanaceae.</title>
        <authorList>
            <person name="Franco-Orozco B."/>
            <person name="Berepiki A."/>
            <person name="Ruiz O."/>
            <person name="Gamble L."/>
            <person name="Griffe L.L."/>
            <person name="Wang S."/>
            <person name="Birch P.R.J."/>
            <person name="Kanyuka K."/>
            <person name="Avrova A."/>
        </authorList>
    </citation>
    <scope>FUNCTION</scope>
</reference>
<reference key="6">
    <citation type="journal article" date="2019" name="J. Exp. Bot.">
        <title>Phytophthora infestans RXLR effectors act in concert at diverse subcellular locations to enhance host colonization.</title>
        <authorList>
            <person name="Wang S."/>
            <person name="McLellan H."/>
            <person name="Bukharova T."/>
            <person name="He Q."/>
            <person name="Murphy F."/>
            <person name="Shi J."/>
            <person name="Sun S."/>
            <person name="van Weymers P."/>
            <person name="Ren Y."/>
            <person name="Thilliez G."/>
            <person name="Wang H."/>
            <person name="Chen X."/>
            <person name="Engelhardt S."/>
            <person name="Vleeshouwers V."/>
            <person name="Gilroy E.M."/>
            <person name="Whisson S.C."/>
            <person name="Hein I."/>
            <person name="Wang X."/>
            <person name="Tian Z."/>
            <person name="Birch P.R.J."/>
            <person name="Boevink P.C."/>
        </authorList>
    </citation>
    <scope>FUNCTION</scope>
    <scope>SUBCELLULAR LOCATION</scope>
</reference>
<reference key="7">
    <citation type="journal article" date="2011" name="J. Biol. Chem.">
        <title>Structures of Phytophthora RXLR effector proteins: a conserved but adaptable fold underpins functional diversity.</title>
        <authorList>
            <person name="Boutemy L.S."/>
            <person name="King S.R."/>
            <person name="Win J."/>
            <person name="Hughes R.K."/>
            <person name="Clarke T.A."/>
            <person name="Blumenschein T.M."/>
            <person name="Kamoun S."/>
            <person name="Banfield M.J."/>
        </authorList>
    </citation>
    <scope>X-RAY CRYSTALLOGRAPHY (1.75 ANGSTROMS) OF 57-121</scope>
    <scope>SUBUNIT</scope>
    <scope>DOMAIN</scope>
</reference>
<protein>
    <recommendedName>
        <fullName evidence="8">RxLR effector protein PexRD2</fullName>
    </recommendedName>
</protein>
<sequence>MRLSYVIVVIATSFLVTTEALSTNTGVQAANVVGPAQRLLRKHYTAAENDDDSEARALNTEKMKTMLKAGMTVDDYAAKLKLTDKIAAAANSARAMEKLGETLKMKKLLRYLNYVAEHTAV</sequence>
<dbReference type="EMBL" id="DS028140">
    <property type="protein sequence ID" value="EEY59369.1"/>
    <property type="molecule type" value="Genomic_DNA"/>
</dbReference>
<dbReference type="RefSeq" id="XP_002900979.1">
    <property type="nucleotide sequence ID" value="XM_002900933.1"/>
</dbReference>
<dbReference type="PDB" id="3ZRG">
    <property type="method" value="X-ray"/>
    <property type="resolution" value="1.75 A"/>
    <property type="chains" value="A/B=57-121"/>
</dbReference>
<dbReference type="PDBsum" id="3ZRG"/>
<dbReference type="SMR" id="D0NIN5"/>
<dbReference type="STRING" id="403677.D0NIN5"/>
<dbReference type="EnsemblProtists" id="PITG_11383T0">
    <property type="protein sequence ID" value="PITG_11383T0"/>
    <property type="gene ID" value="PITG_11383"/>
</dbReference>
<dbReference type="GeneID" id="9473460"/>
<dbReference type="KEGG" id="pif:PITG_11383"/>
<dbReference type="VEuPathDB" id="FungiDB:PITG_11383"/>
<dbReference type="eggNOG" id="ENOG502RFES">
    <property type="taxonomic scope" value="Eukaryota"/>
</dbReference>
<dbReference type="HOGENOM" id="CLU_149657_1_0_1"/>
<dbReference type="InParanoid" id="D0NIN5"/>
<dbReference type="OrthoDB" id="125807at2759"/>
<dbReference type="EvolutionaryTrace" id="D0NIN5"/>
<dbReference type="Proteomes" id="UP000006643">
    <property type="component" value="Partially assembled WGS sequence"/>
</dbReference>
<dbReference type="GO" id="GO:0005576">
    <property type="term" value="C:extracellular region"/>
    <property type="evidence" value="ECO:0007669"/>
    <property type="project" value="UniProtKB-SubCell"/>
</dbReference>
<dbReference type="GO" id="GO:0030430">
    <property type="term" value="C:host cell cytoplasm"/>
    <property type="evidence" value="ECO:0007669"/>
    <property type="project" value="UniProtKB-SubCell"/>
</dbReference>
<dbReference type="GO" id="GO:0042025">
    <property type="term" value="C:host cell nucleus"/>
    <property type="evidence" value="ECO:0007669"/>
    <property type="project" value="UniProtKB-SubCell"/>
</dbReference>
<dbReference type="Gene3D" id="1.10.10.2470">
    <property type="match status" value="1"/>
</dbReference>
<dbReference type="InterPro" id="IPR040691">
    <property type="entry name" value="PexRD2_WYL"/>
</dbReference>
<dbReference type="Pfam" id="PF18488">
    <property type="entry name" value="WYL_3"/>
    <property type="match status" value="1"/>
</dbReference>
<evidence type="ECO:0000255" key="1"/>
<evidence type="ECO:0000269" key="2">
    <source>
    </source>
</evidence>
<evidence type="ECO:0000269" key="3">
    <source>
    </source>
</evidence>
<evidence type="ECO:0000269" key="4">
    <source>
    </source>
</evidence>
<evidence type="ECO:0000269" key="5">
    <source>
    </source>
</evidence>
<evidence type="ECO:0000269" key="6">
    <source>
    </source>
</evidence>
<evidence type="ECO:0000269" key="7">
    <source>
    </source>
</evidence>
<evidence type="ECO:0000303" key="8">
    <source>
    </source>
</evidence>
<evidence type="ECO:0000305" key="9"/>
<evidence type="ECO:0000305" key="10">
    <source>
    </source>
</evidence>
<evidence type="ECO:0000305" key="11">
    <source>
    </source>
</evidence>
<evidence type="ECO:0007829" key="12">
    <source>
        <dbReference type="PDB" id="3ZRG"/>
    </source>
</evidence>
<keyword id="KW-0002">3D-structure</keyword>
<keyword id="KW-1035">Host cytoplasm</keyword>
<keyword id="KW-1048">Host nucleus</keyword>
<keyword id="KW-1185">Reference proteome</keyword>
<keyword id="KW-0964">Secreted</keyword>
<keyword id="KW-0732">Signal</keyword>
<keyword id="KW-0843">Virulence</keyword>